<proteinExistence type="evidence at transcript level"/>
<protein>
    <recommendedName>
        <fullName>Leptin</fullName>
    </recommendedName>
    <alternativeName>
        <fullName>Obesity factor</fullName>
    </alternativeName>
</protein>
<keyword id="KW-1015">Disulfide bond</keyword>
<keyword id="KW-0550">Obesity</keyword>
<keyword id="KW-1185">Reference proteome</keyword>
<keyword id="KW-0964">Secreted</keyword>
<keyword id="KW-0732">Signal</keyword>
<comment type="function">
    <text evidence="2 3 4">Key player in the regulation of energy balance and body weight control. Once released into the circulation, has central and peripheral effects by binding LEPR, found in many tissues, which results in the activation of several major signaling pathways (By similarity). In the hypothalamus, acts as an appetite-regulating factor that induces a decrease in food intake and an increase in energy consumption by inducing anorexinogenic factors and suppressing orexigenic neuropeptides, also regulates bone mass and secretion of hypothalamo-pituitary-adrenal hormones. In the periphery, increases basal metabolism, influences reproductive function, regulates pancreatic beta-cell function and insulin secretion, is pro-angiogenic for endothelial cell and affects innate and adaptive immunity (By similarity). In the arcuate nucleus of the hypothalamus, activates by depolarization POMC neurons inducing FOS and SOCS3 expression to release anorexigenic peptides and inhibits by hyperpolarization NPY neurons inducing SOCS3 with a consequent reduction on release of orexigenic peptides (By similarity). In addition to its known satiety inducing effect, has a modulatory role in nutrient absorption. In the intestine, reduces glucose absorption by enterocytes by activating PKC and leading to a sequential activation of p38, PI3K and ERK signaling pathways which exerts an inhibitory effect on glucose absorption (By similarity). Acts as a growth factor on certain tissues, through the activation of different signaling pathways increases expression of genes involved in cell cycle regulation such as CCND1, via JAK2-STAT3 pathway, or VEGFA, via MAPK1/3 and PI3K-AKT1 pathways (By similarity). May also play an apoptotic role via JAK2-STAT3 pathway and up-regulation of BIRC5 expression. Pro-angiogenic, has mitogenic activity on vascular endothelial cells and plays a role in matrix remodeling by regulating the expression of matrix metalloproteinases (MMPs) and tissue inhibitors of metalloproteinases (TIMPs). In innate immunity, modulates the activity and function of neutrophils by increasing chemotaxis and the secretion of oxygen radicals. Increases phagocytosis by macrophages and enhances secretion of pro-inflammatory mediators. Increases cytotoxic ability of NK cells. Plays a pro-inflammatory role, in synergy with IL1B, by inducing NOS2 which promotes the production of IL6, IL8 and Prostaglandin E2, through a signaling pathway that involves JAK2, PI3K, MAP2K1/MEK1 and MAPK14/p38 (By similarity). In adaptive immunity, promotes the switch of memory T-cells towards T helper-1 cell immune responses (By similarity). Increases CD4(+)CD25(-) T-cell proliferation and reduces autophagy during TCR (T-cell receptor) stimulation, through MTOR signaling pathway activation and BCL2 up-regulation (By similarity).</text>
</comment>
<comment type="subcellular location">
    <subcellularLocation>
        <location evidence="2">Secreted</location>
    </subcellularLocation>
</comment>
<comment type="similarity">
    <text evidence="6">Belongs to the leptin family.</text>
</comment>
<dbReference type="EMBL" id="U58492">
    <property type="protein sequence ID" value="AAC50730.1"/>
    <property type="molecule type" value="mRNA"/>
</dbReference>
<dbReference type="RefSeq" id="NP_001036220.1">
    <property type="nucleotide sequence ID" value="NM_001042755.1"/>
</dbReference>
<dbReference type="SMR" id="Q28504"/>
<dbReference type="FunCoup" id="Q28504">
    <property type="interactions" value="864"/>
</dbReference>
<dbReference type="STRING" id="9544.ENSMMUP00000007035"/>
<dbReference type="PaxDb" id="9544-ENSMMUP00000007035"/>
<dbReference type="Ensembl" id="ENSMMUT00000007488.4">
    <property type="protein sequence ID" value="ENSMMUP00000007035.3"/>
    <property type="gene ID" value="ENSMMUG00000005322.4"/>
</dbReference>
<dbReference type="GeneID" id="698728"/>
<dbReference type="KEGG" id="mcc:698728"/>
<dbReference type="CTD" id="3952"/>
<dbReference type="VEuPathDB" id="HostDB:ENSMMUG00000005322"/>
<dbReference type="VGNC" id="VGNC:81631">
    <property type="gene designation" value="LEP"/>
</dbReference>
<dbReference type="eggNOG" id="ENOG502S5K5">
    <property type="taxonomic scope" value="Eukaryota"/>
</dbReference>
<dbReference type="GeneTree" id="ENSGT00390000011772"/>
<dbReference type="InParanoid" id="Q28504"/>
<dbReference type="OMA" id="MRCGPLC"/>
<dbReference type="OrthoDB" id="9872512at2759"/>
<dbReference type="Proteomes" id="UP000006718">
    <property type="component" value="Chromosome 3"/>
</dbReference>
<dbReference type="Bgee" id="ENSMMUG00000005322">
    <property type="expression patterns" value="Expressed in adipose tissue and 5 other cell types or tissues"/>
</dbReference>
<dbReference type="GO" id="GO:0005737">
    <property type="term" value="C:cytoplasm"/>
    <property type="evidence" value="ECO:0007669"/>
    <property type="project" value="Ensembl"/>
</dbReference>
<dbReference type="GO" id="GO:0005615">
    <property type="term" value="C:extracellular space"/>
    <property type="evidence" value="ECO:0000250"/>
    <property type="project" value="HGNC-UCL"/>
</dbReference>
<dbReference type="GO" id="GO:0003677">
    <property type="term" value="F:DNA binding"/>
    <property type="evidence" value="ECO:0007669"/>
    <property type="project" value="Ensembl"/>
</dbReference>
<dbReference type="GO" id="GO:0005179">
    <property type="term" value="F:hormone activity"/>
    <property type="evidence" value="ECO:0000318"/>
    <property type="project" value="GO_Central"/>
</dbReference>
<dbReference type="GO" id="GO:1990460">
    <property type="term" value="F:leptin receptor binding"/>
    <property type="evidence" value="ECO:0007669"/>
    <property type="project" value="Ensembl"/>
</dbReference>
<dbReference type="GO" id="GO:0051428">
    <property type="term" value="F:peptide hormone receptor binding"/>
    <property type="evidence" value="ECO:0000318"/>
    <property type="project" value="GO_Central"/>
</dbReference>
<dbReference type="GO" id="GO:1990051">
    <property type="term" value="P:activation of protein kinase C activity"/>
    <property type="evidence" value="ECO:0000250"/>
    <property type="project" value="UniProtKB"/>
</dbReference>
<dbReference type="GO" id="GO:0060612">
    <property type="term" value="P:adipose tissue development"/>
    <property type="evidence" value="ECO:0007669"/>
    <property type="project" value="Ensembl"/>
</dbReference>
<dbReference type="GO" id="GO:0008343">
    <property type="term" value="P:adult feeding behavior"/>
    <property type="evidence" value="ECO:0000250"/>
    <property type="project" value="HGNC-UCL"/>
</dbReference>
<dbReference type="GO" id="GO:0001525">
    <property type="term" value="P:angiogenesis"/>
    <property type="evidence" value="ECO:0007669"/>
    <property type="project" value="Ensembl"/>
</dbReference>
<dbReference type="GO" id="GO:0035904">
    <property type="term" value="P:aorta development"/>
    <property type="evidence" value="ECO:0007669"/>
    <property type="project" value="Ensembl"/>
</dbReference>
<dbReference type="GO" id="GO:0008206">
    <property type="term" value="P:bile acid metabolic process"/>
    <property type="evidence" value="ECO:0007669"/>
    <property type="project" value="Ensembl"/>
</dbReference>
<dbReference type="GO" id="GO:0098868">
    <property type="term" value="P:bone growth"/>
    <property type="evidence" value="ECO:0000250"/>
    <property type="project" value="UniProtKB"/>
</dbReference>
<dbReference type="GO" id="GO:0007259">
    <property type="term" value="P:cell surface receptor signaling pathway via JAK-STAT"/>
    <property type="evidence" value="ECO:0007669"/>
    <property type="project" value="Ensembl"/>
</dbReference>
<dbReference type="GO" id="GO:0032869">
    <property type="term" value="P:cellular response to insulin stimulus"/>
    <property type="evidence" value="ECO:0007669"/>
    <property type="project" value="Ensembl"/>
</dbReference>
<dbReference type="GO" id="GO:0044320">
    <property type="term" value="P:cellular response to leptin stimulus"/>
    <property type="evidence" value="ECO:0000250"/>
    <property type="project" value="UniProtKB"/>
</dbReference>
<dbReference type="GO" id="GO:0021954">
    <property type="term" value="P:central nervous system neuron development"/>
    <property type="evidence" value="ECO:0007669"/>
    <property type="project" value="Ensembl"/>
</dbReference>
<dbReference type="GO" id="GO:0008203">
    <property type="term" value="P:cholesterol metabolic process"/>
    <property type="evidence" value="ECO:0007669"/>
    <property type="project" value="Ensembl"/>
</dbReference>
<dbReference type="GO" id="GO:0008340">
    <property type="term" value="P:determination of adult lifespan"/>
    <property type="evidence" value="ECO:0007669"/>
    <property type="project" value="Ensembl"/>
</dbReference>
<dbReference type="GO" id="GO:0042755">
    <property type="term" value="P:eating behavior"/>
    <property type="evidence" value="ECO:0007669"/>
    <property type="project" value="Ensembl"/>
</dbReference>
<dbReference type="GO" id="GO:0051541">
    <property type="term" value="P:elastin metabolic process"/>
    <property type="evidence" value="ECO:0007669"/>
    <property type="project" value="Ensembl"/>
</dbReference>
<dbReference type="GO" id="GO:0006112">
    <property type="term" value="P:energy reserve metabolic process"/>
    <property type="evidence" value="ECO:0000318"/>
    <property type="project" value="GO_Central"/>
</dbReference>
<dbReference type="GO" id="GO:0006635">
    <property type="term" value="P:fatty acid beta-oxidation"/>
    <property type="evidence" value="ECO:0007669"/>
    <property type="project" value="Ensembl"/>
</dbReference>
<dbReference type="GO" id="GO:0042593">
    <property type="term" value="P:glucose homeostasis"/>
    <property type="evidence" value="ECO:0007669"/>
    <property type="project" value="Ensembl"/>
</dbReference>
<dbReference type="GO" id="GO:0006006">
    <property type="term" value="P:glucose metabolic process"/>
    <property type="evidence" value="ECO:0007669"/>
    <property type="project" value="Ensembl"/>
</dbReference>
<dbReference type="GO" id="GO:0042445">
    <property type="term" value="P:hormone metabolic process"/>
    <property type="evidence" value="ECO:0007669"/>
    <property type="project" value="Ensembl"/>
</dbReference>
<dbReference type="GO" id="GO:0030073">
    <property type="term" value="P:insulin secretion"/>
    <property type="evidence" value="ECO:0007669"/>
    <property type="project" value="Ensembl"/>
</dbReference>
<dbReference type="GO" id="GO:0050892">
    <property type="term" value="P:intestinal absorption"/>
    <property type="evidence" value="ECO:0000250"/>
    <property type="project" value="UniProtKB"/>
</dbReference>
<dbReference type="GO" id="GO:0033210">
    <property type="term" value="P:leptin-mediated signaling pathway"/>
    <property type="evidence" value="ECO:0000250"/>
    <property type="project" value="UniProtKB"/>
</dbReference>
<dbReference type="GO" id="GO:0006629">
    <property type="term" value="P:lipid metabolic process"/>
    <property type="evidence" value="ECO:0000318"/>
    <property type="project" value="GO_Central"/>
</dbReference>
<dbReference type="GO" id="GO:0032099">
    <property type="term" value="P:negative regulation of appetite"/>
    <property type="evidence" value="ECO:0000250"/>
    <property type="project" value="HGNC-UCL"/>
</dbReference>
<dbReference type="GO" id="GO:0038108">
    <property type="term" value="P:negative regulation of appetite by leptin-mediated signaling pathway"/>
    <property type="evidence" value="ECO:0000250"/>
    <property type="project" value="UniProtKB"/>
</dbReference>
<dbReference type="GO" id="GO:0010507">
    <property type="term" value="P:negative regulation of autophagy"/>
    <property type="evidence" value="ECO:0000250"/>
    <property type="project" value="UniProtKB"/>
</dbReference>
<dbReference type="GO" id="GO:0046325">
    <property type="term" value="P:negative regulation of D-glucose import"/>
    <property type="evidence" value="ECO:0000250"/>
    <property type="project" value="UniProtKB"/>
</dbReference>
<dbReference type="GO" id="GO:0070093">
    <property type="term" value="P:negative regulation of glucagon secretion"/>
    <property type="evidence" value="ECO:0007669"/>
    <property type="project" value="Ensembl"/>
</dbReference>
<dbReference type="GO" id="GO:0000122">
    <property type="term" value="P:negative regulation of transcription by RNA polymerase II"/>
    <property type="evidence" value="ECO:0007669"/>
    <property type="project" value="Ensembl"/>
</dbReference>
<dbReference type="GO" id="GO:0006909">
    <property type="term" value="P:phagocytosis"/>
    <property type="evidence" value="ECO:0000250"/>
    <property type="project" value="UniProtKB"/>
</dbReference>
<dbReference type="GO" id="GO:0001890">
    <property type="term" value="P:placenta development"/>
    <property type="evidence" value="ECO:0007669"/>
    <property type="project" value="Ensembl"/>
</dbReference>
<dbReference type="GO" id="GO:0120162">
    <property type="term" value="P:positive regulation of cold-induced thermogenesis"/>
    <property type="evidence" value="ECO:0007669"/>
    <property type="project" value="Ensembl"/>
</dbReference>
<dbReference type="GO" id="GO:0048639">
    <property type="term" value="P:positive regulation of developmental growth"/>
    <property type="evidence" value="ECO:0007669"/>
    <property type="project" value="Ensembl"/>
</dbReference>
<dbReference type="GO" id="GO:0032735">
    <property type="term" value="P:positive regulation of interleukin-12 production"/>
    <property type="evidence" value="ECO:0000250"/>
    <property type="project" value="UniProtKB"/>
</dbReference>
<dbReference type="GO" id="GO:0032755">
    <property type="term" value="P:positive regulation of interleukin-6 production"/>
    <property type="evidence" value="ECO:0000250"/>
    <property type="project" value="UniProtKB"/>
</dbReference>
<dbReference type="GO" id="GO:0032757">
    <property type="term" value="P:positive regulation of interleukin-8 production"/>
    <property type="evidence" value="ECO:0000250"/>
    <property type="project" value="UniProtKB"/>
</dbReference>
<dbReference type="GO" id="GO:0043410">
    <property type="term" value="P:positive regulation of MAPK cascade"/>
    <property type="evidence" value="ECO:0000250"/>
    <property type="project" value="UniProtKB"/>
</dbReference>
<dbReference type="GO" id="GO:1900745">
    <property type="term" value="P:positive regulation of p38MAPK cascade"/>
    <property type="evidence" value="ECO:0000250"/>
    <property type="project" value="UniProtKB"/>
</dbReference>
<dbReference type="GO" id="GO:0051897">
    <property type="term" value="P:positive regulation of phosphatidylinositol 3-kinase/protein kinase B signal transduction"/>
    <property type="evidence" value="ECO:0000250"/>
    <property type="project" value="UniProtKB"/>
</dbReference>
<dbReference type="GO" id="GO:0042307">
    <property type="term" value="P:positive regulation of protein import into nucleus"/>
    <property type="evidence" value="ECO:0007669"/>
    <property type="project" value="Ensembl"/>
</dbReference>
<dbReference type="GO" id="GO:0046427">
    <property type="term" value="P:positive regulation of receptor signaling pathway via JAK-STAT"/>
    <property type="evidence" value="ECO:0000250"/>
    <property type="project" value="UniProtKB"/>
</dbReference>
<dbReference type="GO" id="GO:0042102">
    <property type="term" value="P:positive regulation of T cell proliferation"/>
    <property type="evidence" value="ECO:0000250"/>
    <property type="project" value="UniProtKB"/>
</dbReference>
<dbReference type="GO" id="GO:0032008">
    <property type="term" value="P:positive regulation of TOR signaling"/>
    <property type="evidence" value="ECO:0000250"/>
    <property type="project" value="UniProtKB"/>
</dbReference>
<dbReference type="GO" id="GO:0032760">
    <property type="term" value="P:positive regulation of tumor necrosis factor production"/>
    <property type="evidence" value="ECO:0000250"/>
    <property type="project" value="UniProtKB"/>
</dbReference>
<dbReference type="GO" id="GO:0032310">
    <property type="term" value="P:prostaglandin secretion"/>
    <property type="evidence" value="ECO:0000250"/>
    <property type="project" value="UniProtKB"/>
</dbReference>
<dbReference type="GO" id="GO:0045765">
    <property type="term" value="P:regulation of angiogenesis"/>
    <property type="evidence" value="ECO:0000250"/>
    <property type="project" value="UniProtKB"/>
</dbReference>
<dbReference type="GO" id="GO:0046850">
    <property type="term" value="P:regulation of bone remodeling"/>
    <property type="evidence" value="ECO:0000250"/>
    <property type="project" value="UniProtKB"/>
</dbReference>
<dbReference type="GO" id="GO:0090335">
    <property type="term" value="P:regulation of brown fat cell differentiation"/>
    <property type="evidence" value="ECO:0000250"/>
    <property type="project" value="UniProtKB"/>
</dbReference>
<dbReference type="GO" id="GO:0051726">
    <property type="term" value="P:regulation of cell cycle"/>
    <property type="evidence" value="ECO:0000250"/>
    <property type="project" value="UniProtKB"/>
</dbReference>
<dbReference type="GO" id="GO:1900015">
    <property type="term" value="P:regulation of cytokine production involved in inflammatory response"/>
    <property type="evidence" value="ECO:0000250"/>
    <property type="project" value="UniProtKB"/>
</dbReference>
<dbReference type="GO" id="GO:0001936">
    <property type="term" value="P:regulation of endothelial cell proliferation"/>
    <property type="evidence" value="ECO:0000250"/>
    <property type="project" value="UniProtKB"/>
</dbReference>
<dbReference type="GO" id="GO:0006111">
    <property type="term" value="P:regulation of gluconeogenesis"/>
    <property type="evidence" value="ECO:0007669"/>
    <property type="project" value="Ensembl"/>
</dbReference>
<dbReference type="GO" id="GO:0050796">
    <property type="term" value="P:regulation of insulin secretion"/>
    <property type="evidence" value="ECO:0007669"/>
    <property type="project" value="Ensembl"/>
</dbReference>
<dbReference type="GO" id="GO:0030300">
    <property type="term" value="P:regulation of intestinal cholesterol absorption"/>
    <property type="evidence" value="ECO:0007669"/>
    <property type="project" value="Ensembl"/>
</dbReference>
<dbReference type="GO" id="GO:0032814">
    <property type="term" value="P:regulation of natural killer cell activation"/>
    <property type="evidence" value="ECO:0000250"/>
    <property type="project" value="UniProtKB"/>
</dbReference>
<dbReference type="GO" id="GO:0042269">
    <property type="term" value="P:regulation of natural killer cell mediated cytotoxicity"/>
    <property type="evidence" value="ECO:0000250"/>
    <property type="project" value="UniProtKB"/>
</dbReference>
<dbReference type="GO" id="GO:0032817">
    <property type="term" value="P:regulation of natural killer cell proliferation"/>
    <property type="evidence" value="ECO:0000250"/>
    <property type="project" value="UniProtKB"/>
</dbReference>
<dbReference type="GO" id="GO:0050999">
    <property type="term" value="P:regulation of nitric-oxide synthase activity"/>
    <property type="evidence" value="ECO:0000250"/>
    <property type="project" value="UniProtKB"/>
</dbReference>
<dbReference type="GO" id="GO:0050810">
    <property type="term" value="P:regulation of steroid biosynthetic process"/>
    <property type="evidence" value="ECO:0007669"/>
    <property type="project" value="Ensembl"/>
</dbReference>
<dbReference type="GO" id="GO:0002021">
    <property type="term" value="P:response to dietary excess"/>
    <property type="evidence" value="ECO:0007669"/>
    <property type="project" value="Ensembl"/>
</dbReference>
<dbReference type="GO" id="GO:0032868">
    <property type="term" value="P:response to insulin"/>
    <property type="evidence" value="ECO:0000318"/>
    <property type="project" value="GO_Central"/>
</dbReference>
<dbReference type="GO" id="GO:0019953">
    <property type="term" value="P:sexual reproduction"/>
    <property type="evidence" value="ECO:0000250"/>
    <property type="project" value="UniProtKB"/>
</dbReference>
<dbReference type="GO" id="GO:0030217">
    <property type="term" value="P:T cell differentiation"/>
    <property type="evidence" value="ECO:0000250"/>
    <property type="project" value="UniProtKB"/>
</dbReference>
<dbReference type="FunFam" id="1.20.1250.10:FF:000008">
    <property type="entry name" value="Leptin"/>
    <property type="match status" value="1"/>
</dbReference>
<dbReference type="Gene3D" id="1.20.1250.10">
    <property type="match status" value="1"/>
</dbReference>
<dbReference type="InterPro" id="IPR009079">
    <property type="entry name" value="4_helix_cytokine-like_core"/>
</dbReference>
<dbReference type="InterPro" id="IPR000065">
    <property type="entry name" value="Leptin"/>
</dbReference>
<dbReference type="PANTHER" id="PTHR11724">
    <property type="entry name" value="LEPTIN"/>
    <property type="match status" value="1"/>
</dbReference>
<dbReference type="PANTHER" id="PTHR11724:SF1">
    <property type="entry name" value="LEPTIN"/>
    <property type="match status" value="1"/>
</dbReference>
<dbReference type="Pfam" id="PF02024">
    <property type="entry name" value="Leptin"/>
    <property type="match status" value="1"/>
</dbReference>
<dbReference type="PIRSF" id="PIRSF001837">
    <property type="entry name" value="Leptin"/>
    <property type="match status" value="1"/>
</dbReference>
<dbReference type="PRINTS" id="PR00495">
    <property type="entry name" value="LEPTIN"/>
</dbReference>
<dbReference type="SUPFAM" id="SSF47266">
    <property type="entry name" value="4-helical cytokines"/>
    <property type="match status" value="1"/>
</dbReference>
<sequence>MYWRTLWGFLWLWPYLFYIQAVPIQKVQSDTKTLIKTIVTRINDISHTQSVSSKQRVTGLDFIPGLHPVLTLSQMDQTLAIYQQILINLPSRNVIQISNDLENLRDLLHLLAFSKSCHLPLASGLETLESLGDVLEASLYSTEVVALSRLQGSLQDMLWQLDLSPGC</sequence>
<accession>Q28504</accession>
<gene>
    <name type="primary">LEP</name>
    <name type="synonym">OB</name>
</gene>
<feature type="signal peptide" evidence="5">
    <location>
        <begin position="1"/>
        <end position="21"/>
    </location>
</feature>
<feature type="chain" id="PRO_0000017686" description="Leptin">
    <location>
        <begin position="22"/>
        <end position="167"/>
    </location>
</feature>
<feature type="disulfide bond" evidence="1">
    <location>
        <begin position="117"/>
        <end position="167"/>
    </location>
</feature>
<reference key="1">
    <citation type="journal article" date="1996" name="J. Biol. Chem.">
        <title>Regulation of obese (ob) mRNA and plasma leptin levels in rhesus monkeys. Effects of insulin, body weight, and non-insulin-dependent diabetes mellitus.</title>
        <authorList>
            <person name="Hotta K."/>
            <person name="Gustafson T.A."/>
            <person name="Ortmeyer H.K."/>
            <person name="Bodkin N.L."/>
            <person name="Nicolson M.A."/>
            <person name="Hansen B.C."/>
        </authorList>
    </citation>
    <scope>NUCLEOTIDE SEQUENCE [MRNA]</scope>
    <source>
        <tissue>Adipose tissue</tissue>
    </source>
</reference>
<name>LEP_MACMU</name>
<evidence type="ECO:0000250" key="1"/>
<evidence type="ECO:0000250" key="2">
    <source>
        <dbReference type="UniProtKB" id="P41159"/>
    </source>
</evidence>
<evidence type="ECO:0000250" key="3">
    <source>
        <dbReference type="UniProtKB" id="P41160"/>
    </source>
</evidence>
<evidence type="ECO:0000250" key="4">
    <source>
        <dbReference type="UniProtKB" id="P50596"/>
    </source>
</evidence>
<evidence type="ECO:0000255" key="5"/>
<evidence type="ECO:0000305" key="6"/>
<organism>
    <name type="scientific">Macaca mulatta</name>
    <name type="common">Rhesus macaque</name>
    <dbReference type="NCBI Taxonomy" id="9544"/>
    <lineage>
        <taxon>Eukaryota</taxon>
        <taxon>Metazoa</taxon>
        <taxon>Chordata</taxon>
        <taxon>Craniata</taxon>
        <taxon>Vertebrata</taxon>
        <taxon>Euteleostomi</taxon>
        <taxon>Mammalia</taxon>
        <taxon>Eutheria</taxon>
        <taxon>Euarchontoglires</taxon>
        <taxon>Primates</taxon>
        <taxon>Haplorrhini</taxon>
        <taxon>Catarrhini</taxon>
        <taxon>Cercopithecidae</taxon>
        <taxon>Cercopithecinae</taxon>
        <taxon>Macaca</taxon>
    </lineage>
</organism>